<organism>
    <name type="scientific">Oryza sativa subsp. japonica</name>
    <name type="common">Rice</name>
    <dbReference type="NCBI Taxonomy" id="39947"/>
    <lineage>
        <taxon>Eukaryota</taxon>
        <taxon>Viridiplantae</taxon>
        <taxon>Streptophyta</taxon>
        <taxon>Embryophyta</taxon>
        <taxon>Tracheophyta</taxon>
        <taxon>Spermatophyta</taxon>
        <taxon>Magnoliopsida</taxon>
        <taxon>Liliopsida</taxon>
        <taxon>Poales</taxon>
        <taxon>Poaceae</taxon>
        <taxon>BOP clade</taxon>
        <taxon>Oryzoideae</taxon>
        <taxon>Oryzeae</taxon>
        <taxon>Oryzinae</taxon>
        <taxon>Oryza</taxon>
        <taxon>Oryza sativa</taxon>
    </lineage>
</organism>
<keyword id="KW-0963">Cytoplasm</keyword>
<keyword id="KW-1185">Reference proteome</keyword>
<keyword id="KW-0346">Stress response</keyword>
<sequence>MSLVRRSNVFDPFADFWDPFDGVFRSLVPATSDRDTAAFANARVDWKETPESHVFKADLPGVKKEEVKVEVEEGNVLVISGQRSKEKEDKNDKWHRVERSSGQFMRRFRLPENAKVDQVKASMENGVLTVTVPKAEVKKPEVKAIEISG</sequence>
<evidence type="ECO:0000255" key="1">
    <source>
        <dbReference type="PROSITE-ProRule" id="PRU00285"/>
    </source>
</evidence>
<evidence type="ECO:0000269" key="2">
    <source>
    </source>
</evidence>
<evidence type="ECO:0000305" key="3"/>
<gene>
    <name type="primary">HSP16.9C</name>
    <name type="ordered locus">Os01g0136000</name>
    <name type="ordered locus">LOC_Os01g04360</name>
    <name type="ORF">OsJ_00278</name>
    <name type="ORF">P0443D08.3</name>
</gene>
<comment type="subunit">
    <text>May form oligomeric structures.</text>
</comment>
<comment type="subcellular location">
    <subcellularLocation>
        <location evidence="3">Cytoplasm</location>
    </subcellularLocation>
</comment>
<comment type="induction">
    <text evidence="2">By heat shock.</text>
</comment>
<comment type="similarity">
    <text evidence="1">Belongs to the small heat shock protein (HSP20) family.</text>
</comment>
<accession>Q943E7</accession>
<accession>P93437</accession>
<accession>Q0JQW1</accession>
<feature type="chain" id="PRO_0000233693" description="16.9 kDa class I heat shock protein 3">
    <location>
        <begin position="1"/>
        <end position="149"/>
    </location>
</feature>
<feature type="domain" description="sHSP" evidence="1">
    <location>
        <begin position="35"/>
        <end position="149"/>
    </location>
</feature>
<feature type="sequence conflict" description="In Ref. 1; AAB39856." evidence="3" ref="1">
    <original>F</original>
    <variation>L</variation>
    <location>
        <position position="24"/>
    </location>
</feature>
<feature type="sequence conflict" description="In Ref. 1; AAB39856." evidence="3" ref="1">
    <original>K</original>
    <variation>N</variation>
    <location>
        <position position="138"/>
    </location>
</feature>
<proteinExistence type="evidence at transcript level"/>
<reference key="1">
    <citation type="submission" date="1996-12" db="EMBL/GenBank/DDBJ databases">
        <authorList>
            <person name="Huang C.-Y."/>
            <person name="Guan J.-C."/>
            <person name="Lin C.-Y."/>
        </authorList>
    </citation>
    <scope>NUCLEOTIDE SEQUENCE [GENOMIC DNA]</scope>
    <source>
        <strain>cv. Tainung 67</strain>
    </source>
</reference>
<reference key="2">
    <citation type="journal article" date="2002" name="Nature">
        <title>The genome sequence and structure of rice chromosome 1.</title>
        <authorList>
            <person name="Sasaki T."/>
            <person name="Matsumoto T."/>
            <person name="Yamamoto K."/>
            <person name="Sakata K."/>
            <person name="Baba T."/>
            <person name="Katayose Y."/>
            <person name="Wu J."/>
            <person name="Niimura Y."/>
            <person name="Cheng Z."/>
            <person name="Nagamura Y."/>
            <person name="Antonio B.A."/>
            <person name="Kanamori H."/>
            <person name="Hosokawa S."/>
            <person name="Masukawa M."/>
            <person name="Arikawa K."/>
            <person name="Chiden Y."/>
            <person name="Hayashi M."/>
            <person name="Okamoto M."/>
            <person name="Ando T."/>
            <person name="Aoki H."/>
            <person name="Arita K."/>
            <person name="Hamada M."/>
            <person name="Harada C."/>
            <person name="Hijishita S."/>
            <person name="Honda M."/>
            <person name="Ichikawa Y."/>
            <person name="Idonuma A."/>
            <person name="Iijima M."/>
            <person name="Ikeda M."/>
            <person name="Ikeno M."/>
            <person name="Ito S."/>
            <person name="Ito T."/>
            <person name="Ito Y."/>
            <person name="Ito Y."/>
            <person name="Iwabuchi A."/>
            <person name="Kamiya K."/>
            <person name="Karasawa W."/>
            <person name="Katagiri S."/>
            <person name="Kikuta A."/>
            <person name="Kobayashi N."/>
            <person name="Kono I."/>
            <person name="Machita K."/>
            <person name="Maehara T."/>
            <person name="Mizuno H."/>
            <person name="Mizubayashi T."/>
            <person name="Mukai Y."/>
            <person name="Nagasaki H."/>
            <person name="Nakashima M."/>
            <person name="Nakama Y."/>
            <person name="Nakamichi Y."/>
            <person name="Nakamura M."/>
            <person name="Namiki N."/>
            <person name="Negishi M."/>
            <person name="Ohta I."/>
            <person name="Ono N."/>
            <person name="Saji S."/>
            <person name="Sakai K."/>
            <person name="Shibata M."/>
            <person name="Shimokawa T."/>
            <person name="Shomura A."/>
            <person name="Song J."/>
            <person name="Takazaki Y."/>
            <person name="Terasawa K."/>
            <person name="Tsuji K."/>
            <person name="Waki K."/>
            <person name="Yamagata H."/>
            <person name="Yamane H."/>
            <person name="Yoshiki S."/>
            <person name="Yoshihara R."/>
            <person name="Yukawa K."/>
            <person name="Zhong H."/>
            <person name="Iwama H."/>
            <person name="Endo T."/>
            <person name="Ito H."/>
            <person name="Hahn J.H."/>
            <person name="Kim H.-I."/>
            <person name="Eun M.-Y."/>
            <person name="Yano M."/>
            <person name="Jiang J."/>
            <person name="Gojobori T."/>
        </authorList>
    </citation>
    <scope>NUCLEOTIDE SEQUENCE [LARGE SCALE GENOMIC DNA]</scope>
    <source>
        <strain>cv. Nipponbare</strain>
    </source>
</reference>
<reference key="3">
    <citation type="journal article" date="2005" name="Nature">
        <title>The map-based sequence of the rice genome.</title>
        <authorList>
            <consortium name="International rice genome sequencing project (IRGSP)"/>
        </authorList>
    </citation>
    <scope>NUCLEOTIDE SEQUENCE [LARGE SCALE GENOMIC DNA]</scope>
    <source>
        <strain>cv. Nipponbare</strain>
    </source>
</reference>
<reference key="4">
    <citation type="journal article" date="2008" name="Nucleic Acids Res.">
        <title>The rice annotation project database (RAP-DB): 2008 update.</title>
        <authorList>
            <consortium name="The rice annotation project (RAP)"/>
        </authorList>
    </citation>
    <scope>GENOME REANNOTATION</scope>
    <source>
        <strain>cv. Nipponbare</strain>
    </source>
</reference>
<reference key="5">
    <citation type="journal article" date="2013" name="Rice">
        <title>Improvement of the Oryza sativa Nipponbare reference genome using next generation sequence and optical map data.</title>
        <authorList>
            <person name="Kawahara Y."/>
            <person name="de la Bastide M."/>
            <person name="Hamilton J.P."/>
            <person name="Kanamori H."/>
            <person name="McCombie W.R."/>
            <person name="Ouyang S."/>
            <person name="Schwartz D.C."/>
            <person name="Tanaka T."/>
            <person name="Wu J."/>
            <person name="Zhou S."/>
            <person name="Childs K.L."/>
            <person name="Davidson R.M."/>
            <person name="Lin H."/>
            <person name="Quesada-Ocampo L."/>
            <person name="Vaillancourt B."/>
            <person name="Sakai H."/>
            <person name="Lee S.S."/>
            <person name="Kim J."/>
            <person name="Numa H."/>
            <person name="Itoh T."/>
            <person name="Buell C.R."/>
            <person name="Matsumoto T."/>
        </authorList>
    </citation>
    <scope>GENOME REANNOTATION</scope>
    <source>
        <strain>cv. Nipponbare</strain>
    </source>
</reference>
<reference key="6">
    <citation type="journal article" date="2005" name="PLoS Biol.">
        <title>The genomes of Oryza sativa: a history of duplications.</title>
        <authorList>
            <person name="Yu J."/>
            <person name="Wang J."/>
            <person name="Lin W."/>
            <person name="Li S."/>
            <person name="Li H."/>
            <person name="Zhou J."/>
            <person name="Ni P."/>
            <person name="Dong W."/>
            <person name="Hu S."/>
            <person name="Zeng C."/>
            <person name="Zhang J."/>
            <person name="Zhang Y."/>
            <person name="Li R."/>
            <person name="Xu Z."/>
            <person name="Li S."/>
            <person name="Li X."/>
            <person name="Zheng H."/>
            <person name="Cong L."/>
            <person name="Lin L."/>
            <person name="Yin J."/>
            <person name="Geng J."/>
            <person name="Li G."/>
            <person name="Shi J."/>
            <person name="Liu J."/>
            <person name="Lv H."/>
            <person name="Li J."/>
            <person name="Wang J."/>
            <person name="Deng Y."/>
            <person name="Ran L."/>
            <person name="Shi X."/>
            <person name="Wang X."/>
            <person name="Wu Q."/>
            <person name="Li C."/>
            <person name="Ren X."/>
            <person name="Wang J."/>
            <person name="Wang X."/>
            <person name="Li D."/>
            <person name="Liu D."/>
            <person name="Zhang X."/>
            <person name="Ji Z."/>
            <person name="Zhao W."/>
            <person name="Sun Y."/>
            <person name="Zhang Z."/>
            <person name="Bao J."/>
            <person name="Han Y."/>
            <person name="Dong L."/>
            <person name="Ji J."/>
            <person name="Chen P."/>
            <person name="Wu S."/>
            <person name="Liu J."/>
            <person name="Xiao Y."/>
            <person name="Bu D."/>
            <person name="Tan J."/>
            <person name="Yang L."/>
            <person name="Ye C."/>
            <person name="Zhang J."/>
            <person name="Xu J."/>
            <person name="Zhou Y."/>
            <person name="Yu Y."/>
            <person name="Zhang B."/>
            <person name="Zhuang S."/>
            <person name="Wei H."/>
            <person name="Liu B."/>
            <person name="Lei M."/>
            <person name="Yu H."/>
            <person name="Li Y."/>
            <person name="Xu H."/>
            <person name="Wei S."/>
            <person name="He X."/>
            <person name="Fang L."/>
            <person name="Zhang Z."/>
            <person name="Zhang Y."/>
            <person name="Huang X."/>
            <person name="Su Z."/>
            <person name="Tong W."/>
            <person name="Li J."/>
            <person name="Tong Z."/>
            <person name="Li S."/>
            <person name="Ye J."/>
            <person name="Wang L."/>
            <person name="Fang L."/>
            <person name="Lei T."/>
            <person name="Chen C.-S."/>
            <person name="Chen H.-C."/>
            <person name="Xu Z."/>
            <person name="Li H."/>
            <person name="Huang H."/>
            <person name="Zhang F."/>
            <person name="Xu H."/>
            <person name="Li N."/>
            <person name="Zhao C."/>
            <person name="Li S."/>
            <person name="Dong L."/>
            <person name="Huang Y."/>
            <person name="Li L."/>
            <person name="Xi Y."/>
            <person name="Qi Q."/>
            <person name="Li W."/>
            <person name="Zhang B."/>
            <person name="Hu W."/>
            <person name="Zhang Y."/>
            <person name="Tian X."/>
            <person name="Jiao Y."/>
            <person name="Liang X."/>
            <person name="Jin J."/>
            <person name="Gao L."/>
            <person name="Zheng W."/>
            <person name="Hao B."/>
            <person name="Liu S.-M."/>
            <person name="Wang W."/>
            <person name="Yuan L."/>
            <person name="Cao M."/>
            <person name="McDermott J."/>
            <person name="Samudrala R."/>
            <person name="Wang J."/>
            <person name="Wong G.K.-S."/>
            <person name="Yang H."/>
        </authorList>
    </citation>
    <scope>NUCLEOTIDE SEQUENCE [LARGE SCALE GENOMIC DNA]</scope>
    <source>
        <strain>cv. Nipponbare</strain>
    </source>
</reference>
<reference key="7">
    <citation type="journal article" date="2004" name="Plant Mol. Biol.">
        <title>Characterization of the genomic structures and selective expression profiles of nine class I small heat shock protein genes clustered on two chromosomes in rice (Oryza sativa L.).</title>
        <authorList>
            <person name="Guan J.-C."/>
            <person name="Jinn T.-L."/>
            <person name="Yeh C.-H."/>
            <person name="Feng S.-P."/>
            <person name="Chen Y.-M."/>
            <person name="Lin C.-Y."/>
        </authorList>
    </citation>
    <scope>INDUCTION</scope>
</reference>
<reference key="8">
    <citation type="journal article" date="2009" name="BMC Genomics">
        <title>Rice sHsp genes: genomic organization and expression profiling under stress and development.</title>
        <authorList>
            <person name="Sarkar N.K."/>
            <person name="Kim Y.-K."/>
            <person name="Grover A."/>
        </authorList>
    </citation>
    <scope>GENE FAMILY</scope>
</reference>
<name>HS16C_ORYSJ</name>
<dbReference type="EMBL" id="U81385">
    <property type="protein sequence ID" value="AAB39856.1"/>
    <property type="molecule type" value="Genomic_DNA"/>
</dbReference>
<dbReference type="EMBL" id="AP003250">
    <property type="protein sequence ID" value="BAB64125.1"/>
    <property type="molecule type" value="Genomic_DNA"/>
</dbReference>
<dbReference type="EMBL" id="AP008207">
    <property type="protein sequence ID" value="BAF03867.1"/>
    <property type="molecule type" value="Genomic_DNA"/>
</dbReference>
<dbReference type="EMBL" id="AP014957">
    <property type="protein sequence ID" value="BAS70262.1"/>
    <property type="molecule type" value="Genomic_DNA"/>
</dbReference>
<dbReference type="EMBL" id="CM000138">
    <property type="protein sequence ID" value="EAZ10445.1"/>
    <property type="molecule type" value="Genomic_DNA"/>
</dbReference>
<dbReference type="PIR" id="T04171">
    <property type="entry name" value="T04171"/>
</dbReference>
<dbReference type="RefSeq" id="XP_015633414.1">
    <property type="nucleotide sequence ID" value="XM_015777928.1"/>
</dbReference>
<dbReference type="SMR" id="Q943E7"/>
<dbReference type="FunCoup" id="Q943E7">
    <property type="interactions" value="447"/>
</dbReference>
<dbReference type="STRING" id="39947.Q943E7"/>
<dbReference type="PaxDb" id="39947-Q943E7"/>
<dbReference type="EnsemblPlants" id="Os01t0136000-01">
    <property type="protein sequence ID" value="Os01t0136000-01"/>
    <property type="gene ID" value="Os01g0136000"/>
</dbReference>
<dbReference type="Gramene" id="Os01t0136000-01">
    <property type="protein sequence ID" value="Os01t0136000-01"/>
    <property type="gene ID" value="Os01g0136000"/>
</dbReference>
<dbReference type="KEGG" id="dosa:Os01g0136000"/>
<dbReference type="eggNOG" id="KOG0710">
    <property type="taxonomic scope" value="Eukaryota"/>
</dbReference>
<dbReference type="HOGENOM" id="CLU_046737_5_0_1"/>
<dbReference type="InParanoid" id="Q943E7"/>
<dbReference type="OrthoDB" id="5511210at2759"/>
<dbReference type="Proteomes" id="UP000000763">
    <property type="component" value="Chromosome 1"/>
</dbReference>
<dbReference type="Proteomes" id="UP000007752">
    <property type="component" value="Chromosome 1"/>
</dbReference>
<dbReference type="Proteomes" id="UP000059680">
    <property type="component" value="Chromosome 1"/>
</dbReference>
<dbReference type="ExpressionAtlas" id="Q943E7">
    <property type="expression patterns" value="baseline and differential"/>
</dbReference>
<dbReference type="GO" id="GO:0005737">
    <property type="term" value="C:cytoplasm"/>
    <property type="evidence" value="ECO:0007669"/>
    <property type="project" value="UniProtKB-SubCell"/>
</dbReference>
<dbReference type="GO" id="GO:0051082">
    <property type="term" value="F:unfolded protein binding"/>
    <property type="evidence" value="ECO:0000318"/>
    <property type="project" value="GO_Central"/>
</dbReference>
<dbReference type="GO" id="GO:0051259">
    <property type="term" value="P:protein complex oligomerization"/>
    <property type="evidence" value="ECO:0000318"/>
    <property type="project" value="GO_Central"/>
</dbReference>
<dbReference type="GO" id="GO:0006457">
    <property type="term" value="P:protein folding"/>
    <property type="evidence" value="ECO:0000318"/>
    <property type="project" value="GO_Central"/>
</dbReference>
<dbReference type="GO" id="GO:0009408">
    <property type="term" value="P:response to heat"/>
    <property type="evidence" value="ECO:0000270"/>
    <property type="project" value="UniProtKB"/>
</dbReference>
<dbReference type="GO" id="GO:0042542">
    <property type="term" value="P:response to hydrogen peroxide"/>
    <property type="evidence" value="ECO:0000318"/>
    <property type="project" value="GO_Central"/>
</dbReference>
<dbReference type="GO" id="GO:0009651">
    <property type="term" value="P:response to salt stress"/>
    <property type="evidence" value="ECO:0000318"/>
    <property type="project" value="GO_Central"/>
</dbReference>
<dbReference type="CDD" id="cd06472">
    <property type="entry name" value="ACD_ScHsp26_like"/>
    <property type="match status" value="1"/>
</dbReference>
<dbReference type="FunFam" id="2.60.40.790:FF:000007">
    <property type="entry name" value="17.4 kDa class I heat shock protein"/>
    <property type="match status" value="1"/>
</dbReference>
<dbReference type="Gene3D" id="2.60.40.790">
    <property type="match status" value="1"/>
</dbReference>
<dbReference type="InterPro" id="IPR002068">
    <property type="entry name" value="A-crystallin/Hsp20_dom"/>
</dbReference>
<dbReference type="InterPro" id="IPR008978">
    <property type="entry name" value="HSP20-like_chaperone"/>
</dbReference>
<dbReference type="InterPro" id="IPR031107">
    <property type="entry name" value="Small_HSP"/>
</dbReference>
<dbReference type="PANTHER" id="PTHR11527">
    <property type="entry name" value="HEAT-SHOCK PROTEIN 20 FAMILY MEMBER"/>
    <property type="match status" value="1"/>
</dbReference>
<dbReference type="Pfam" id="PF00011">
    <property type="entry name" value="HSP20"/>
    <property type="match status" value="1"/>
</dbReference>
<dbReference type="SUPFAM" id="SSF49764">
    <property type="entry name" value="HSP20-like chaperones"/>
    <property type="match status" value="1"/>
</dbReference>
<dbReference type="PROSITE" id="PS01031">
    <property type="entry name" value="SHSP"/>
    <property type="match status" value="1"/>
</dbReference>
<protein>
    <recommendedName>
        <fullName>16.9 kDa class I heat shock protein 3</fullName>
    </recommendedName>
    <alternativeName>
        <fullName>16.9 kDa heat shock protein 3</fullName>
        <shortName>OsHsp16.9C</shortName>
    </alternativeName>
</protein>